<keyword id="KW-0025">Alternative splicing</keyword>
<keyword id="KW-1003">Cell membrane</keyword>
<keyword id="KW-0903">Direct protein sequencing</keyword>
<keyword id="KW-0256">Endoplasmic reticulum</keyword>
<keyword id="KW-0325">Glycoprotein</keyword>
<keyword id="KW-0378">Hydrolase</keyword>
<keyword id="KW-0472">Membrane</keyword>
<keyword id="KW-0597">Phosphoprotein</keyword>
<keyword id="KW-0645">Protease</keyword>
<keyword id="KW-1267">Proteomics identification</keyword>
<keyword id="KW-1185">Reference proteome</keyword>
<keyword id="KW-0812">Transmembrane</keyword>
<keyword id="KW-1133">Transmembrane helix</keyword>
<evidence type="ECO:0000250" key="1">
    <source>
        <dbReference type="UniProtKB" id="P49768"/>
    </source>
</evidence>
<evidence type="ECO:0000250" key="2">
    <source>
        <dbReference type="UniProtKB" id="P49810"/>
    </source>
</evidence>
<evidence type="ECO:0000250" key="3">
    <source>
        <dbReference type="UniProtKB" id="Q9D8V0"/>
    </source>
</evidence>
<evidence type="ECO:0000255" key="4"/>
<evidence type="ECO:0000256" key="5">
    <source>
        <dbReference type="SAM" id="MobiDB-lite"/>
    </source>
</evidence>
<evidence type="ECO:0000269" key="6">
    <source>
    </source>
</evidence>
<evidence type="ECO:0000269" key="7">
    <source>
    </source>
</evidence>
<evidence type="ECO:0000269" key="8">
    <source>
    </source>
</evidence>
<evidence type="ECO:0000269" key="9">
    <source>
    </source>
</evidence>
<evidence type="ECO:0000269" key="10">
    <source>
    </source>
</evidence>
<evidence type="ECO:0000269" key="11">
    <source>
    </source>
</evidence>
<evidence type="ECO:0000269" key="12">
    <source>
    </source>
</evidence>
<evidence type="ECO:0000269" key="13">
    <source>
    </source>
</evidence>
<evidence type="ECO:0000269" key="14">
    <source>
    </source>
</evidence>
<evidence type="ECO:0000269" key="15">
    <source>
    </source>
</evidence>
<evidence type="ECO:0000269" key="16">
    <source>
    </source>
</evidence>
<evidence type="ECO:0000303" key="17">
    <source>
    </source>
</evidence>
<evidence type="ECO:0000303" key="18">
    <source>
    </source>
</evidence>
<evidence type="ECO:0000303" key="19">
    <source>
    </source>
</evidence>
<evidence type="ECO:0000303" key="20">
    <source>
    </source>
</evidence>
<evidence type="ECO:0000305" key="21"/>
<evidence type="ECO:0000305" key="22">
    <source>
    </source>
</evidence>
<evidence type="ECO:0000312" key="23">
    <source>
        <dbReference type="HGNC" id="HGNC:16435"/>
    </source>
</evidence>
<evidence type="ECO:0007744" key="24">
    <source>
    </source>
</evidence>
<sequence length="377" mass="41488">MDSALSDPHNGSAEAGGPTNSTTRPPSTPEGIALAYGSLLLMALLPIFFGALRSVRCARGKNASDMPETITSRDAARFPIIASCTLLGLYLFFKIFSQEYINLLLSMYFFVLGILALSHTISPFMNKFFPASFPNRQYQLLFTQGSGENKEEIINYEFDTKDLVCLGLSSIVGVWYLLRKHWIANNLFGLAFSLNGVELLHLNNVSTGCILLGGLFIYDVFWVFGTNVMVTVAKSFEAPIKLVFPQDLLEKGLEANNFAMLGLGDVVIPGIFIALLLRFDISLKKNTHTYFYTSFAAYIFGLGLTIFIMHIFKHAQPALLYLVPACIGFPVLVALAKGEVTEMFSYEESNPKDPAAVTESKEGTEASASKGLEKKEK</sequence>
<proteinExistence type="evidence at protein level"/>
<accession>Q8TCT9</accession>
<accession>B2RAY5</accession>
<accession>E1P5L3</accession>
<accession>Q15K36</accession>
<accession>Q540H8</accession>
<accession>Q5JWP2</accession>
<accession>Q5JWP3</accession>
<accession>Q5JWP4</accession>
<accession>Q5JWP5</accession>
<accession>Q7Z4F2</accession>
<accession>Q86Y35</accession>
<accession>Q95H87</accession>
<accession>Q9H110</accession>
<accession>Q9H111</accession>
<dbReference type="EC" id="3.4.23.-" evidence="6 7 11"/>
<dbReference type="EMBL" id="AJ420895">
    <property type="protein sequence ID" value="CAD13132.1"/>
    <property type="molecule type" value="mRNA"/>
</dbReference>
<dbReference type="EMBL" id="AF515663">
    <property type="protein sequence ID" value="AAN77099.1"/>
    <property type="molecule type" value="mRNA"/>
</dbReference>
<dbReference type="EMBL" id="AY169310">
    <property type="protein sequence ID" value="AAO12535.1"/>
    <property type="molecule type" value="mRNA"/>
</dbReference>
<dbReference type="EMBL" id="AY169311">
    <property type="protein sequence ID" value="AAO12536.1"/>
    <property type="molecule type" value="mRNA"/>
</dbReference>
<dbReference type="EMBL" id="AY169312">
    <property type="protein sequence ID" value="AAO12537.1"/>
    <property type="molecule type" value="mRNA"/>
</dbReference>
<dbReference type="EMBL" id="DQ168450">
    <property type="protein sequence ID" value="ABA56163.1"/>
    <property type="molecule type" value="mRNA"/>
</dbReference>
<dbReference type="EMBL" id="AJ345029">
    <property type="protein sequence ID" value="CAC87790.1"/>
    <property type="molecule type" value="mRNA"/>
</dbReference>
<dbReference type="EMBL" id="AF483215">
    <property type="protein sequence ID" value="AAM22076.1"/>
    <property type="molecule type" value="mRNA"/>
</dbReference>
<dbReference type="EMBL" id="AF172086">
    <property type="protein sequence ID" value="AAQ13609.1"/>
    <property type="status" value="ALT_FRAME"/>
    <property type="molecule type" value="mRNA"/>
</dbReference>
<dbReference type="EMBL" id="AK074686">
    <property type="protein sequence ID" value="BAC11138.1"/>
    <property type="status" value="ALT_SEQ"/>
    <property type="molecule type" value="mRNA"/>
</dbReference>
<dbReference type="EMBL" id="AK075283">
    <property type="protein sequence ID" value="BAC11519.1"/>
    <property type="molecule type" value="mRNA"/>
</dbReference>
<dbReference type="EMBL" id="AK314410">
    <property type="protein sequence ID" value="BAG37032.1"/>
    <property type="molecule type" value="mRNA"/>
</dbReference>
<dbReference type="EMBL" id="AL110115">
    <property type="status" value="NOT_ANNOTATED_CDS"/>
    <property type="molecule type" value="Genomic_DNA"/>
</dbReference>
<dbReference type="EMBL" id="AL121751">
    <property type="status" value="NOT_ANNOTATED_CDS"/>
    <property type="molecule type" value="Genomic_DNA"/>
</dbReference>
<dbReference type="EMBL" id="CH471077">
    <property type="protein sequence ID" value="EAW76436.1"/>
    <property type="molecule type" value="Genomic_DNA"/>
</dbReference>
<dbReference type="EMBL" id="CH471077">
    <property type="protein sequence ID" value="EAW76437.1"/>
    <property type="molecule type" value="Genomic_DNA"/>
</dbReference>
<dbReference type="EMBL" id="CH471077">
    <property type="protein sequence ID" value="EAW76435.1"/>
    <property type="molecule type" value="Genomic_DNA"/>
</dbReference>
<dbReference type="EMBL" id="CH471077">
    <property type="protein sequence ID" value="EAW76438.1"/>
    <property type="molecule type" value="Genomic_DNA"/>
</dbReference>
<dbReference type="EMBL" id="BC008938">
    <property type="protein sequence ID" value="AAH08938.1"/>
    <property type="molecule type" value="mRNA"/>
</dbReference>
<dbReference type="EMBL" id="BC008959">
    <property type="protein sequence ID" value="AAH08959.1"/>
    <property type="molecule type" value="mRNA"/>
</dbReference>
<dbReference type="EMBL" id="BC062595">
    <property type="protein sequence ID" value="AAH62595.1"/>
    <property type="molecule type" value="mRNA"/>
</dbReference>
<dbReference type="CCDS" id="CCDS13182.1">
    <molecule id="Q8TCT9-1"/>
</dbReference>
<dbReference type="CCDS" id="CCDS13183.1">
    <molecule id="Q8TCT9-4"/>
</dbReference>
<dbReference type="CCDS" id="CCDS42861.1">
    <molecule id="Q8TCT9-2"/>
</dbReference>
<dbReference type="RefSeq" id="NP_110416.1">
    <molecule id="Q8TCT9-1"/>
    <property type="nucleotide sequence ID" value="NM_030789.4"/>
</dbReference>
<dbReference type="RefSeq" id="NP_848695.1">
    <molecule id="Q8TCT9-4"/>
    <property type="nucleotide sequence ID" value="NM_178580.3"/>
</dbReference>
<dbReference type="RefSeq" id="NP_848696.1">
    <molecule id="Q8TCT9-2"/>
    <property type="nucleotide sequence ID" value="NM_178581.3"/>
</dbReference>
<dbReference type="RefSeq" id="NP_848697.1">
    <property type="nucleotide sequence ID" value="NM_178582.2"/>
</dbReference>
<dbReference type="BioGRID" id="123505">
    <property type="interactions" value="161"/>
</dbReference>
<dbReference type="FunCoup" id="Q8TCT9">
    <property type="interactions" value="2252"/>
</dbReference>
<dbReference type="IntAct" id="Q8TCT9">
    <property type="interactions" value="61"/>
</dbReference>
<dbReference type="MINT" id="Q8TCT9"/>
<dbReference type="STRING" id="9606.ENSP00000381237"/>
<dbReference type="ChEMBL" id="CHEMBL4523407"/>
<dbReference type="DrugBank" id="DB00277">
    <property type="generic name" value="Theophylline"/>
</dbReference>
<dbReference type="MEROPS" id="A22.003"/>
<dbReference type="TCDB" id="1.A.54.3.5">
    <property type="family name" value="the presenilin er ca(2+) leak channel (presenilin) family"/>
</dbReference>
<dbReference type="GlyCosmos" id="Q8TCT9">
    <property type="glycosylation" value="2 sites, No reported glycans"/>
</dbReference>
<dbReference type="GlyGen" id="Q8TCT9">
    <property type="glycosylation" value="4 sites, 2 N-linked glycans (2 sites), 1 O-linked glycan (1 site)"/>
</dbReference>
<dbReference type="iPTMnet" id="Q8TCT9"/>
<dbReference type="MetOSite" id="Q8TCT9"/>
<dbReference type="PhosphoSitePlus" id="Q8TCT9"/>
<dbReference type="SwissPalm" id="Q8TCT9"/>
<dbReference type="BioMuta" id="HM13"/>
<dbReference type="DMDM" id="25008563"/>
<dbReference type="CPTAC" id="CPTAC-1612"/>
<dbReference type="jPOST" id="Q8TCT9"/>
<dbReference type="MassIVE" id="Q8TCT9"/>
<dbReference type="PeptideAtlas" id="Q8TCT9"/>
<dbReference type="ProteomicsDB" id="74165">
    <molecule id="Q8TCT9-1"/>
</dbReference>
<dbReference type="ProteomicsDB" id="74166">
    <molecule id="Q8TCT9-2"/>
</dbReference>
<dbReference type="ProteomicsDB" id="74167">
    <molecule id="Q8TCT9-4"/>
</dbReference>
<dbReference type="ProteomicsDB" id="74168">
    <molecule id="Q8TCT9-5"/>
</dbReference>
<dbReference type="Pumba" id="Q8TCT9"/>
<dbReference type="TopDownProteomics" id="Q8TCT9-1">
    <molecule id="Q8TCT9-1"/>
</dbReference>
<dbReference type="TopDownProteomics" id="Q8TCT9-5">
    <molecule id="Q8TCT9-5"/>
</dbReference>
<dbReference type="Antibodypedia" id="25181">
    <property type="antibodies" value="132 antibodies from 21 providers"/>
</dbReference>
<dbReference type="DNASU" id="81502"/>
<dbReference type="Ensembl" id="ENST00000340852.9">
    <molecule id="Q8TCT9-1"/>
    <property type="protein sequence ID" value="ENSP00000343032.5"/>
    <property type="gene ID" value="ENSG00000101294.20"/>
</dbReference>
<dbReference type="Ensembl" id="ENST00000398174.9">
    <molecule id="Q8TCT9-2"/>
    <property type="protein sequence ID" value="ENSP00000381237.3"/>
    <property type="gene ID" value="ENSG00000101294.20"/>
</dbReference>
<dbReference type="Ensembl" id="ENST00000674240.1">
    <molecule id="Q8TCT9-4"/>
    <property type="protein sequence ID" value="ENSP00000501423.1"/>
    <property type="gene ID" value="ENSG00000101294.20"/>
</dbReference>
<dbReference type="GeneID" id="81502"/>
<dbReference type="KEGG" id="hsa:81502"/>
<dbReference type="MANE-Select" id="ENST00000398174.9">
    <molecule id="Q8TCT9-2"/>
    <property type="protein sequence ID" value="ENSP00000381237.3"/>
    <property type="RefSeq nucleotide sequence ID" value="NM_178581.3"/>
    <property type="RefSeq protein sequence ID" value="NP_848696.1"/>
</dbReference>
<dbReference type="UCSC" id="uc002wwb.3">
    <molecule id="Q8TCT9-1"/>
    <property type="organism name" value="human"/>
</dbReference>
<dbReference type="AGR" id="HGNC:16435"/>
<dbReference type="CTD" id="81502"/>
<dbReference type="DisGeNET" id="81502"/>
<dbReference type="GeneCards" id="HM13"/>
<dbReference type="HGNC" id="HGNC:16435">
    <property type="gene designation" value="HM13"/>
</dbReference>
<dbReference type="HPA" id="ENSG00000101294">
    <property type="expression patterns" value="Low tissue specificity"/>
</dbReference>
<dbReference type="MIM" id="607106">
    <property type="type" value="gene"/>
</dbReference>
<dbReference type="neXtProt" id="NX_Q8TCT9"/>
<dbReference type="OpenTargets" id="ENSG00000101294"/>
<dbReference type="PharmGKB" id="PA29314"/>
<dbReference type="VEuPathDB" id="HostDB:ENSG00000101294"/>
<dbReference type="GeneTree" id="ENSGT00940000156478"/>
<dbReference type="HOGENOM" id="CLU_023799_0_0_1"/>
<dbReference type="InParanoid" id="Q8TCT9"/>
<dbReference type="OMA" id="FLYDIWW"/>
<dbReference type="OrthoDB" id="29661at2759"/>
<dbReference type="PAN-GO" id="Q8TCT9">
    <property type="GO annotations" value="5 GO annotations based on evolutionary models"/>
</dbReference>
<dbReference type="PhylomeDB" id="Q8TCT9"/>
<dbReference type="TreeFam" id="TF105854"/>
<dbReference type="PathwayCommons" id="Q8TCT9"/>
<dbReference type="Reactome" id="R-HSA-9707587">
    <property type="pathway name" value="Regulation of HMOX1 expression and activity"/>
</dbReference>
<dbReference type="SignaLink" id="Q8TCT9"/>
<dbReference type="BioGRID-ORCS" id="81502">
    <property type="hits" value="38 hits in 1155 CRISPR screens"/>
</dbReference>
<dbReference type="ChiTaRS" id="HM13">
    <property type="organism name" value="human"/>
</dbReference>
<dbReference type="GeneWiki" id="HM13"/>
<dbReference type="GenomeRNAi" id="81502"/>
<dbReference type="Pharos" id="Q8TCT9">
    <property type="development level" value="Tbio"/>
</dbReference>
<dbReference type="PRO" id="PR:Q8TCT9"/>
<dbReference type="Proteomes" id="UP000005640">
    <property type="component" value="Chromosome 20"/>
</dbReference>
<dbReference type="RNAct" id="Q8TCT9">
    <property type="molecule type" value="protein"/>
</dbReference>
<dbReference type="Bgee" id="ENSG00000101294">
    <property type="expression patterns" value="Expressed in body of pancreas and 181 other cell types or tissues"/>
</dbReference>
<dbReference type="ExpressionAtlas" id="Q8TCT9">
    <property type="expression patterns" value="baseline and differential"/>
</dbReference>
<dbReference type="GO" id="GO:0009986">
    <property type="term" value="C:cell surface"/>
    <property type="evidence" value="ECO:0000250"/>
    <property type="project" value="UniProtKB"/>
</dbReference>
<dbReference type="GO" id="GO:0098554">
    <property type="term" value="C:cytoplasmic side of endoplasmic reticulum membrane"/>
    <property type="evidence" value="ECO:0000314"/>
    <property type="project" value="UniProtKB"/>
</dbReference>
<dbReference type="GO" id="GO:0036513">
    <property type="term" value="C:Derlin-1 retrotranslocation complex"/>
    <property type="evidence" value="ECO:0000314"/>
    <property type="project" value="ParkinsonsUK-UCL"/>
</dbReference>
<dbReference type="GO" id="GO:0005783">
    <property type="term" value="C:endoplasmic reticulum"/>
    <property type="evidence" value="ECO:0000314"/>
    <property type="project" value="HPA"/>
</dbReference>
<dbReference type="GO" id="GO:0005789">
    <property type="term" value="C:endoplasmic reticulum membrane"/>
    <property type="evidence" value="ECO:0000304"/>
    <property type="project" value="Reactome"/>
</dbReference>
<dbReference type="GO" id="GO:0098553">
    <property type="term" value="C:lumenal side of endoplasmic reticulum membrane"/>
    <property type="evidence" value="ECO:0000314"/>
    <property type="project" value="UniProtKB"/>
</dbReference>
<dbReference type="GO" id="GO:0016020">
    <property type="term" value="C:membrane"/>
    <property type="evidence" value="ECO:0007005"/>
    <property type="project" value="UniProtKB"/>
</dbReference>
<dbReference type="GO" id="GO:0005886">
    <property type="term" value="C:plasma membrane"/>
    <property type="evidence" value="ECO:0007669"/>
    <property type="project" value="UniProtKB-SubCell"/>
</dbReference>
<dbReference type="GO" id="GO:0005791">
    <property type="term" value="C:rough endoplasmic reticulum"/>
    <property type="evidence" value="ECO:0000314"/>
    <property type="project" value="UniProtKB"/>
</dbReference>
<dbReference type="GO" id="GO:0042500">
    <property type="term" value="F:aspartic endopeptidase activity, intramembrane cleaving"/>
    <property type="evidence" value="ECO:0000314"/>
    <property type="project" value="UniProtKB"/>
</dbReference>
<dbReference type="GO" id="GO:0008233">
    <property type="term" value="F:peptidase activity"/>
    <property type="evidence" value="ECO:0000314"/>
    <property type="project" value="UniProtKB"/>
</dbReference>
<dbReference type="GO" id="GO:0042803">
    <property type="term" value="F:protein homodimerization activity"/>
    <property type="evidence" value="ECO:0000314"/>
    <property type="project" value="UniProtKB"/>
</dbReference>
<dbReference type="GO" id="GO:0031625">
    <property type="term" value="F:ubiquitin protein ligase binding"/>
    <property type="evidence" value="ECO:0000353"/>
    <property type="project" value="UniProtKB"/>
</dbReference>
<dbReference type="GO" id="GO:0034599">
    <property type="term" value="P:cellular response to oxidative stress"/>
    <property type="evidence" value="ECO:0000304"/>
    <property type="project" value="Reactome"/>
</dbReference>
<dbReference type="GO" id="GO:0001701">
    <property type="term" value="P:in utero embryonic development"/>
    <property type="evidence" value="ECO:0007669"/>
    <property type="project" value="Ensembl"/>
</dbReference>
<dbReference type="GO" id="GO:0033619">
    <property type="term" value="P:membrane protein proteolysis"/>
    <property type="evidence" value="ECO:0000314"/>
    <property type="project" value="UniProtKB"/>
</dbReference>
<dbReference type="GO" id="GO:1904211">
    <property type="term" value="P:membrane protein proteolysis involved in retrograde protein transport, ER to cytosol"/>
    <property type="evidence" value="ECO:0000315"/>
    <property type="project" value="ParkinsonsUK-UCL"/>
</dbReference>
<dbReference type="GO" id="GO:0006465">
    <property type="term" value="P:signal peptide processing"/>
    <property type="evidence" value="ECO:0000318"/>
    <property type="project" value="GO_Central"/>
</dbReference>
<dbReference type="InterPro" id="IPR007369">
    <property type="entry name" value="Peptidase_A22B_SPP"/>
</dbReference>
<dbReference type="InterPro" id="IPR006639">
    <property type="entry name" value="Preselin/SPP"/>
</dbReference>
<dbReference type="PANTHER" id="PTHR12174:SF23">
    <property type="entry name" value="MINOR HISTOCOMPATIBILITY ANTIGEN H13"/>
    <property type="match status" value="1"/>
</dbReference>
<dbReference type="PANTHER" id="PTHR12174">
    <property type="entry name" value="SIGNAL PEPTIDE PEPTIDASE"/>
    <property type="match status" value="1"/>
</dbReference>
<dbReference type="Pfam" id="PF04258">
    <property type="entry name" value="Peptidase_A22B"/>
    <property type="match status" value="1"/>
</dbReference>
<dbReference type="SMART" id="SM00730">
    <property type="entry name" value="PSN"/>
    <property type="match status" value="1"/>
</dbReference>
<comment type="function">
    <text evidence="3 6 7 9 11 16">Catalyzes intramembrane proteolysis of signal peptides that have been removed from precursors of secretory and membrane proteins, resulting in the release of the fragment from the ER membrane into the cytoplasm (PubMed:12077416). Required to generate lymphocyte cell surface (HLA-E) epitopes derived from MHC class I signal peptides (PubMed:11714810). May be necessary for the removal of the signal peptide that remains attached to the hepatitis C virus core protein after the initial proteolytic processing of the polyprotein (PubMed:12145199). Involved in the intramembrane cleavage of the integral membrane protein PSEN1 (PubMed:11714810, PubMed:12077416, PubMed:14741365). Cleaves the integral membrane protein XBP1 isoform 1 in a DERL1/RNF139-dependent manner (PubMed:25239945). May play a role in graft rejection (By similarity).</text>
</comment>
<comment type="subunit">
    <text evidence="12 13 15 16">Monomer (PubMed:15385547, PubMed:15998642). Homodimer (PubMed:15385547, PubMed:15998642). Interacts with RNF139 (PubMed:19720873, PubMed:25239945). Interacts with DERL1 and XBP1 isoform 1 (PubMed:25239945).</text>
</comment>
<comment type="interaction">
    <interactant intactId="EBI-347472">
        <id>Q8TCT9</id>
    </interactant>
    <interactant intactId="EBI-398977">
        <id>Q9BUN8</id>
        <label>DERL1</label>
    </interactant>
    <organismsDiffer>false</organismsDiffer>
    <experiments>6</experiments>
</comment>
<comment type="interaction">
    <interactant intactId="EBI-347472">
        <id>Q8TCT9</id>
    </interactant>
    <interactant intactId="EBI-741037">
        <id>Q9BRK4</id>
        <label>LZTS2</label>
    </interactant>
    <organismsDiffer>false</organismsDiffer>
    <experiments>3</experiments>
</comment>
<comment type="interaction">
    <interactant intactId="EBI-347472">
        <id>Q8TCT9</id>
    </interactant>
    <interactant intactId="EBI-395883">
        <id>P07237</id>
        <label>P4HB</label>
    </interactant>
    <organismsDiffer>false</organismsDiffer>
    <experiments>3</experiments>
</comment>
<comment type="interaction">
    <interactant intactId="EBI-347472">
        <id>Q8TCT9</id>
    </interactant>
    <interactant intactId="EBI-1551681">
        <id>Q8WU17</id>
        <label>RNF139</label>
    </interactant>
    <organismsDiffer>false</organismsDiffer>
    <experiments>2</experiments>
</comment>
<comment type="interaction">
    <interactant intactId="EBI-347472">
        <id>Q8TCT9</id>
    </interactant>
    <interactant intactId="EBI-7631279">
        <id>P17861-1</id>
        <label>XBP1</label>
    </interactant>
    <organismsDiffer>false</organismsDiffer>
    <experiments>2</experiments>
</comment>
<comment type="subcellular location">
    <subcellularLocation>
        <location evidence="13">Endoplasmic reticulum membrane</location>
        <topology evidence="21">Multi-pass membrane protein</topology>
    </subcellularLocation>
    <subcellularLocation>
        <location evidence="7 12">Membrane</location>
        <topology evidence="21">Multi-pass membrane protein</topology>
        <orientation evidence="7 12">Lumenal side</orientation>
    </subcellularLocation>
</comment>
<comment type="subcellular location">
    <molecule>Isoform 4</molecule>
    <subcellularLocation>
        <location evidence="3">Cell membrane</location>
        <topology evidence="3">Multi-pass membrane protein</topology>
    </subcellularLocation>
</comment>
<comment type="alternative products">
    <event type="alternative splicing"/>
    <isoform>
        <id>Q8TCT9-1</id>
        <name>1</name>
        <sequence type="displayed"/>
    </isoform>
    <isoform>
        <id>Q8TCT9-2</id>
        <name>2</name>
        <sequence type="described" ref="VSP_005196"/>
    </isoform>
    <isoform>
        <id>Q8TCT9-4</id>
        <name>4</name>
        <sequence type="described" ref="VSP_015083"/>
    </isoform>
    <isoform>
        <id>Q8TCT9-5</id>
        <name>5</name>
        <sequence type="described" ref="VSP_015082"/>
    </isoform>
</comment>
<comment type="tissue specificity">
    <text evidence="8 10">Widely expressed with highest levels in kidney, liver, placenta, lung, leukocytes and small intestine and reduced expression in heart and skeletal muscle. Expressed abundantly in the CNS with highest levels in thalamus and medulla.</text>
</comment>
<comment type="domain">
    <text evidence="1 7 12">The first transmembrane domain may act as a type I signal anchor (PubMed:12077416, PubMed:15385547). The PAL motif is required for normal active site conformation (By similarity).</text>
</comment>
<comment type="PTM">
    <text evidence="7 12 14">N-glycosylated.</text>
</comment>
<comment type="similarity">
    <text evidence="21">Belongs to the peptidase A22B family.</text>
</comment>
<comment type="sequence caution" evidence="21">
    <conflict type="frameshift">
        <sequence resource="EMBL-CDS" id="AAQ13609"/>
    </conflict>
</comment>
<comment type="sequence caution" evidence="21">
    <conflict type="miscellaneous discrepancy">
        <sequence resource="EMBL-CDS" id="BAC11138"/>
    </conflict>
    <text>Intron retention.</text>
</comment>
<reference key="1">
    <citation type="journal article" date="2002" name="Science">
        <title>Identification of signal peptide peptidase, a presenilin-type aspartic protease.</title>
        <authorList>
            <person name="Weihofen A."/>
            <person name="Binns K."/>
            <person name="Lemberg M.K."/>
            <person name="Ashman K."/>
            <person name="Martoglio B."/>
        </authorList>
    </citation>
    <scope>NUCLEOTIDE SEQUENCE [MRNA] (ISOFORM 1)</scope>
    <scope>PROTEIN SEQUENCE OF 62-73; 128-136; 137-161; 242-251 AND 338-352</scope>
    <scope>FUNCTION</scope>
    <scope>IDENTIFICATION BY MASS SPECTROMETRY</scope>
    <scope>TOPOLOGY</scope>
    <scope>GLYCOSYLATION</scope>
    <scope>MUTAGENESIS OF ASN-10; ASN-20 AND ASP-265</scope>
    <source>
        <tissue>Cervix carcinoma</tissue>
    </source>
</reference>
<reference key="2">
    <citation type="journal article" date="2003" name="Gene Expr. Patterns">
        <title>Expression of the presenilin-like signal peptide peptidase (SPP) in mouse adult brain and during development.</title>
        <authorList>
            <person name="Urny J."/>
            <person name="Hermans-Borgmeyer I."/>
            <person name="Gercken G."/>
            <person name="Chica Schaller H."/>
        </authorList>
    </citation>
    <scope>NUCLEOTIDE SEQUENCE [MRNA] (ISOFORM 1)</scope>
    <scope>TISSUE SPECIFICITY</scope>
    <source>
        <tissue>Placenta</tissue>
    </source>
</reference>
<reference key="3">
    <citation type="journal article" date="2002" name="Biochemistry (Mosc.)">
        <title>Novel class of polytopic proteins with domains associated with putative protease activity.</title>
        <authorList>
            <person name="Grigorenko A.P."/>
            <person name="Moliaka Y.K."/>
            <person name="Korovaitseva G.I."/>
            <person name="Rogaev E.I."/>
        </authorList>
    </citation>
    <scope>NUCLEOTIDE SEQUENCE [MRNA] (ISOFORMS 1; 2 AND 4)</scope>
    <scope>TISSUE SPECIFICITY</scope>
    <source>
        <tissue>Blood</tissue>
        <tissue>Hippocampus</tissue>
    </source>
</reference>
<reference key="4">
    <citation type="journal article" date="2006" name="Biochim. Biophys. Acta">
        <title>Cell-surface expression of a new splice variant of the mouse signal peptide peptidase.</title>
        <authorList>
            <person name="Urny J."/>
            <person name="Hermans-Borgmeyer I."/>
            <person name="Schaller H.C."/>
        </authorList>
    </citation>
    <scope>NUCLEOTIDE SEQUENCE [MRNA] (ISOFORM 4)</scope>
</reference>
<reference key="5">
    <citation type="submission" date="2001-09" db="EMBL/GenBank/DDBJ databases">
        <title>Characterization of a new protein family with homology to presenilins.</title>
        <authorList>
            <person name="Irmler M."/>
            <person name="Tomiuk S."/>
            <person name="Korner M.R."/>
            <person name="Hofmann K."/>
            <person name="Conradt M."/>
        </authorList>
    </citation>
    <scope>NUCLEOTIDE SEQUENCE [MRNA] (ISOFORM 1)</scope>
</reference>
<reference key="6">
    <citation type="submission" date="2002-02" db="EMBL/GenBank/DDBJ databases">
        <title>Genomic analysis of the H13 minor histocompatibility antigen gene.</title>
        <authorList>
            <person name="Brown A.C."/>
            <person name="Roopenian D.C."/>
        </authorList>
    </citation>
    <scope>NUCLEOTIDE SEQUENCE [MRNA] (ISOFORM 1)</scope>
</reference>
<reference key="7">
    <citation type="submission" date="1999-07" db="EMBL/GenBank/DDBJ databases">
        <authorList>
            <person name="Liu Y.Q."/>
            <person name="Gong J."/>
            <person name="Yu L.T."/>
            <person name="Sheng H."/>
            <person name="Qin B.M."/>
            <person name="Zhao B."/>
            <person name="Liu B."/>
            <person name="Wang X.Y."/>
            <person name="Zhang Q."/>
            <person name="Song L."/>
            <person name="Gao Y."/>
            <person name="Zhang C.L."/>
            <person name="Ye J."/>
            <person name="Ji X.J."/>
            <person name="Liu B.H."/>
            <person name="Lu H."/>
            <person name="Xu H.S."/>
            <person name="Chen J.Z."/>
            <person name="Cai M.Q."/>
            <person name="Zheng W.Y."/>
            <person name="Teng C.Y."/>
            <person name="Liu Q."/>
            <person name="Lin J."/>
            <person name="Zhang A.M."/>
            <person name="Gao R.L."/>
            <person name="Hui R.T."/>
        </authorList>
    </citation>
    <scope>NUCLEOTIDE SEQUENCE [LARGE SCALE MRNA] (ISOFORM 1)</scope>
    <source>
        <tissue>Aorta</tissue>
    </source>
</reference>
<reference key="8">
    <citation type="journal article" date="2004" name="Nat. Genet.">
        <title>Complete sequencing and characterization of 21,243 full-length human cDNAs.</title>
        <authorList>
            <person name="Ota T."/>
            <person name="Suzuki Y."/>
            <person name="Nishikawa T."/>
            <person name="Otsuki T."/>
            <person name="Sugiyama T."/>
            <person name="Irie R."/>
            <person name="Wakamatsu A."/>
            <person name="Hayashi K."/>
            <person name="Sato H."/>
            <person name="Nagai K."/>
            <person name="Kimura K."/>
            <person name="Makita H."/>
            <person name="Sekine M."/>
            <person name="Obayashi M."/>
            <person name="Nishi T."/>
            <person name="Shibahara T."/>
            <person name="Tanaka T."/>
            <person name="Ishii S."/>
            <person name="Yamamoto J."/>
            <person name="Saito K."/>
            <person name="Kawai Y."/>
            <person name="Isono Y."/>
            <person name="Nakamura Y."/>
            <person name="Nagahari K."/>
            <person name="Murakami K."/>
            <person name="Yasuda T."/>
            <person name="Iwayanagi T."/>
            <person name="Wagatsuma M."/>
            <person name="Shiratori A."/>
            <person name="Sudo H."/>
            <person name="Hosoiri T."/>
            <person name="Kaku Y."/>
            <person name="Kodaira H."/>
            <person name="Kondo H."/>
            <person name="Sugawara M."/>
            <person name="Takahashi M."/>
            <person name="Kanda K."/>
            <person name="Yokoi T."/>
            <person name="Furuya T."/>
            <person name="Kikkawa E."/>
            <person name="Omura Y."/>
            <person name="Abe K."/>
            <person name="Kamihara K."/>
            <person name="Katsuta N."/>
            <person name="Sato K."/>
            <person name="Tanikawa M."/>
            <person name="Yamazaki M."/>
            <person name="Ninomiya K."/>
            <person name="Ishibashi T."/>
            <person name="Yamashita H."/>
            <person name="Murakawa K."/>
            <person name="Fujimori K."/>
            <person name="Tanai H."/>
            <person name="Kimata M."/>
            <person name="Watanabe M."/>
            <person name="Hiraoka S."/>
            <person name="Chiba Y."/>
            <person name="Ishida S."/>
            <person name="Ono Y."/>
            <person name="Takiguchi S."/>
            <person name="Watanabe S."/>
            <person name="Yosida M."/>
            <person name="Hotuta T."/>
            <person name="Kusano J."/>
            <person name="Kanehori K."/>
            <person name="Takahashi-Fujii A."/>
            <person name="Hara H."/>
            <person name="Tanase T.-O."/>
            <person name="Nomura Y."/>
            <person name="Togiya S."/>
            <person name="Komai F."/>
            <person name="Hara R."/>
            <person name="Takeuchi K."/>
            <person name="Arita M."/>
            <person name="Imose N."/>
            <person name="Musashino K."/>
            <person name="Yuuki H."/>
            <person name="Oshima A."/>
            <person name="Sasaki N."/>
            <person name="Aotsuka S."/>
            <person name="Yoshikawa Y."/>
            <person name="Matsunawa H."/>
            <person name="Ichihara T."/>
            <person name="Shiohata N."/>
            <person name="Sano S."/>
            <person name="Moriya S."/>
            <person name="Momiyama H."/>
            <person name="Satoh N."/>
            <person name="Takami S."/>
            <person name="Terashima Y."/>
            <person name="Suzuki O."/>
            <person name="Nakagawa S."/>
            <person name="Senoh A."/>
            <person name="Mizoguchi H."/>
            <person name="Goto Y."/>
            <person name="Shimizu F."/>
            <person name="Wakebe H."/>
            <person name="Hishigaki H."/>
            <person name="Watanabe T."/>
            <person name="Sugiyama A."/>
            <person name="Takemoto M."/>
            <person name="Kawakami B."/>
            <person name="Yamazaki M."/>
            <person name="Watanabe K."/>
            <person name="Kumagai A."/>
            <person name="Itakura S."/>
            <person name="Fukuzumi Y."/>
            <person name="Fujimori Y."/>
            <person name="Komiyama M."/>
            <person name="Tashiro H."/>
            <person name="Tanigami A."/>
            <person name="Fujiwara T."/>
            <person name="Ono T."/>
            <person name="Yamada K."/>
            <person name="Fujii Y."/>
            <person name="Ozaki K."/>
            <person name="Hirao M."/>
            <person name="Ohmori Y."/>
            <person name="Kawabata A."/>
            <person name="Hikiji T."/>
            <person name="Kobatake N."/>
            <person name="Inagaki H."/>
            <person name="Ikema Y."/>
            <person name="Okamoto S."/>
            <person name="Okitani R."/>
            <person name="Kawakami T."/>
            <person name="Noguchi S."/>
            <person name="Itoh T."/>
            <person name="Shigeta K."/>
            <person name="Senba T."/>
            <person name="Matsumura K."/>
            <person name="Nakajima Y."/>
            <person name="Mizuno T."/>
            <person name="Morinaga M."/>
            <person name="Sasaki M."/>
            <person name="Togashi T."/>
            <person name="Oyama M."/>
            <person name="Hata H."/>
            <person name="Watanabe M."/>
            <person name="Komatsu T."/>
            <person name="Mizushima-Sugano J."/>
            <person name="Satoh T."/>
            <person name="Shirai Y."/>
            <person name="Takahashi Y."/>
            <person name="Nakagawa K."/>
            <person name="Okumura K."/>
            <person name="Nagase T."/>
            <person name="Nomura N."/>
            <person name="Kikuchi H."/>
            <person name="Masuho Y."/>
            <person name="Yamashita R."/>
            <person name="Nakai K."/>
            <person name="Yada T."/>
            <person name="Nakamura Y."/>
            <person name="Ohara O."/>
            <person name="Isogai T."/>
            <person name="Sugano S."/>
        </authorList>
    </citation>
    <scope>NUCLEOTIDE SEQUENCE [LARGE SCALE MRNA] (ISOFORM 1)</scope>
    <source>
        <tissue>Mammary gland</tissue>
        <tissue>Retinoblastoma</tissue>
        <tissue>Testis</tissue>
    </source>
</reference>
<reference key="9">
    <citation type="journal article" date="2001" name="Nature">
        <title>The DNA sequence and comparative analysis of human chromosome 20.</title>
        <authorList>
            <person name="Deloukas P."/>
            <person name="Matthews L.H."/>
            <person name="Ashurst J.L."/>
            <person name="Burton J."/>
            <person name="Gilbert J.G.R."/>
            <person name="Jones M."/>
            <person name="Stavrides G."/>
            <person name="Almeida J.P."/>
            <person name="Babbage A.K."/>
            <person name="Bagguley C.L."/>
            <person name="Bailey J."/>
            <person name="Barlow K.F."/>
            <person name="Bates K.N."/>
            <person name="Beard L.M."/>
            <person name="Beare D.M."/>
            <person name="Beasley O.P."/>
            <person name="Bird C.P."/>
            <person name="Blakey S.E."/>
            <person name="Bridgeman A.M."/>
            <person name="Brown A.J."/>
            <person name="Buck D."/>
            <person name="Burrill W.D."/>
            <person name="Butler A.P."/>
            <person name="Carder C."/>
            <person name="Carter N.P."/>
            <person name="Chapman J.C."/>
            <person name="Clamp M."/>
            <person name="Clark G."/>
            <person name="Clark L.N."/>
            <person name="Clark S.Y."/>
            <person name="Clee C.M."/>
            <person name="Clegg S."/>
            <person name="Cobley V.E."/>
            <person name="Collier R.E."/>
            <person name="Connor R.E."/>
            <person name="Corby N.R."/>
            <person name="Coulson A."/>
            <person name="Coville G.J."/>
            <person name="Deadman R."/>
            <person name="Dhami P.D."/>
            <person name="Dunn M."/>
            <person name="Ellington A.G."/>
            <person name="Frankland J.A."/>
            <person name="Fraser A."/>
            <person name="French L."/>
            <person name="Garner P."/>
            <person name="Grafham D.V."/>
            <person name="Griffiths C."/>
            <person name="Griffiths M.N.D."/>
            <person name="Gwilliam R."/>
            <person name="Hall R.E."/>
            <person name="Hammond S."/>
            <person name="Harley J.L."/>
            <person name="Heath P.D."/>
            <person name="Ho S."/>
            <person name="Holden J.L."/>
            <person name="Howden P.J."/>
            <person name="Huckle E."/>
            <person name="Hunt A.R."/>
            <person name="Hunt S.E."/>
            <person name="Jekosch K."/>
            <person name="Johnson C.M."/>
            <person name="Johnson D."/>
            <person name="Kay M.P."/>
            <person name="Kimberley A.M."/>
            <person name="King A."/>
            <person name="Knights A."/>
            <person name="Laird G.K."/>
            <person name="Lawlor S."/>
            <person name="Lehvaeslaiho M.H."/>
            <person name="Leversha M.A."/>
            <person name="Lloyd C."/>
            <person name="Lloyd D.M."/>
            <person name="Lovell J.D."/>
            <person name="Marsh V.L."/>
            <person name="Martin S.L."/>
            <person name="McConnachie L.J."/>
            <person name="McLay K."/>
            <person name="McMurray A.A."/>
            <person name="Milne S.A."/>
            <person name="Mistry D."/>
            <person name="Moore M.J.F."/>
            <person name="Mullikin J.C."/>
            <person name="Nickerson T."/>
            <person name="Oliver K."/>
            <person name="Parker A."/>
            <person name="Patel R."/>
            <person name="Pearce T.A.V."/>
            <person name="Peck A.I."/>
            <person name="Phillimore B.J.C.T."/>
            <person name="Prathalingam S.R."/>
            <person name="Plumb R.W."/>
            <person name="Ramsay H."/>
            <person name="Rice C.M."/>
            <person name="Ross M.T."/>
            <person name="Scott C.E."/>
            <person name="Sehra H.K."/>
            <person name="Shownkeen R."/>
            <person name="Sims S."/>
            <person name="Skuce C.D."/>
            <person name="Smith M.L."/>
            <person name="Soderlund C."/>
            <person name="Steward C.A."/>
            <person name="Sulston J.E."/>
            <person name="Swann R.M."/>
            <person name="Sycamore N."/>
            <person name="Taylor R."/>
            <person name="Tee L."/>
            <person name="Thomas D.W."/>
            <person name="Thorpe A."/>
            <person name="Tracey A."/>
            <person name="Tromans A.C."/>
            <person name="Vaudin M."/>
            <person name="Wall M."/>
            <person name="Wallis J.M."/>
            <person name="Whitehead S.L."/>
            <person name="Whittaker P."/>
            <person name="Willey D.L."/>
            <person name="Williams L."/>
            <person name="Williams S.A."/>
            <person name="Wilming L."/>
            <person name="Wray P.W."/>
            <person name="Hubbard T."/>
            <person name="Durbin R.M."/>
            <person name="Bentley D.R."/>
            <person name="Beck S."/>
            <person name="Rogers J."/>
        </authorList>
    </citation>
    <scope>NUCLEOTIDE SEQUENCE [LARGE SCALE GENOMIC DNA]</scope>
</reference>
<reference key="10">
    <citation type="submission" date="2005-09" db="EMBL/GenBank/DDBJ databases">
        <authorList>
            <person name="Mural R.J."/>
            <person name="Istrail S."/>
            <person name="Sutton G.G."/>
            <person name="Florea L."/>
            <person name="Halpern A.L."/>
            <person name="Mobarry C.M."/>
            <person name="Lippert R."/>
            <person name="Walenz B."/>
            <person name="Shatkay H."/>
            <person name="Dew I."/>
            <person name="Miller J.R."/>
            <person name="Flanigan M.J."/>
            <person name="Edwards N.J."/>
            <person name="Bolanos R."/>
            <person name="Fasulo D."/>
            <person name="Halldorsson B.V."/>
            <person name="Hannenhalli S."/>
            <person name="Turner R."/>
            <person name="Yooseph S."/>
            <person name="Lu F."/>
            <person name="Nusskern D.R."/>
            <person name="Shue B.C."/>
            <person name="Zheng X.H."/>
            <person name="Zhong F."/>
            <person name="Delcher A.L."/>
            <person name="Huson D.H."/>
            <person name="Kravitz S.A."/>
            <person name="Mouchard L."/>
            <person name="Reinert K."/>
            <person name="Remington K.A."/>
            <person name="Clark A.G."/>
            <person name="Waterman M.S."/>
            <person name="Eichler E.E."/>
            <person name="Adams M.D."/>
            <person name="Hunkapiller M.W."/>
            <person name="Myers E.W."/>
            <person name="Venter J.C."/>
        </authorList>
    </citation>
    <scope>NUCLEOTIDE SEQUENCE [LARGE SCALE GENOMIC DNA]</scope>
</reference>
<reference key="11">
    <citation type="journal article" date="2004" name="Genome Res.">
        <title>The status, quality, and expansion of the NIH full-length cDNA project: the Mammalian Gene Collection (MGC).</title>
        <authorList>
            <consortium name="The MGC Project Team"/>
        </authorList>
    </citation>
    <scope>NUCLEOTIDE SEQUENCE [LARGE SCALE MRNA] (ISOFORM 1)</scope>
    <source>
        <tissue>Brain</tissue>
        <tissue>Muscle</tissue>
    </source>
</reference>
<reference key="12">
    <citation type="journal article" date="2001" name="J. Immunol.">
        <title>Intramembrane proteolysis of signal peptides: an essential step in the generation of HLA-E epitopes.</title>
        <authorList>
            <person name="Lemberg M.K."/>
            <person name="Bland F.A."/>
            <person name="Weihofen A."/>
            <person name="Braud V.M."/>
            <person name="Martoglio B."/>
        </authorList>
    </citation>
    <scope>FUNCTION</scope>
</reference>
<reference key="13">
    <citation type="journal article" date="2002" name="EMBO J.">
        <title>Intramembrane proteolysis promotes trafficking of hepatitis C virus core protein to lipid droplets.</title>
        <authorList>
            <person name="McLauchlan J."/>
            <person name="Lemberg M.K."/>
            <person name="Hope G."/>
            <person name="Martoglio B."/>
        </authorList>
    </citation>
    <scope>FUNCTION</scope>
</reference>
<reference key="14">
    <citation type="journal article" date="2004" name="FEBS Lett.">
        <title>Impas 1 possesses endoproteolytic activity against multipass membrane protein substrate cleaving the presenilin 1 holoprotein.</title>
        <authorList>
            <person name="Moliaka Y.K."/>
            <person name="Grigorenko A."/>
            <person name="Madera D."/>
            <person name="Rogaev E.I."/>
        </authorList>
    </citation>
    <scope>FUNCTION</scope>
    <scope>MUTAGENESIS OF ASP-219; GLY-264; ASP-265 AND PRO-317</scope>
</reference>
<reference key="15">
    <citation type="journal article" date="2004" name="J. Biol. Chem.">
        <title>Consensus analysis of signal peptide peptidase and homologous human aspartic proteases reveals opposite topology of catalytic domains compared with presenilins.</title>
        <authorList>
            <person name="Friedmann E."/>
            <person name="Lemberg M.K."/>
            <person name="Weihofen A."/>
            <person name="Dev K.K."/>
            <person name="Dengler U."/>
            <person name="Rovelli G."/>
            <person name="Martoglio B."/>
        </authorList>
    </citation>
    <scope>SUBUNIT</scope>
    <scope>TOPOLOGY</scope>
    <scope>SUBCELLULAR LOCATION</scope>
    <scope>GLYCOSYLATION</scope>
</reference>
<reference key="16">
    <citation type="journal article" date="2005" name="J. Biol. Chem.">
        <title>Differential localization and identification of a critical aspartate suggest non-redundant proteolytic functions of the presenilin homologues SPPL2b and SPPL3.</title>
        <authorList>
            <person name="Krawitz P."/>
            <person name="Haffner C."/>
            <person name="Fluhrer R."/>
            <person name="Steiner H."/>
            <person name="Schmid B."/>
            <person name="Haass C."/>
        </authorList>
    </citation>
    <scope>SUBUNIT</scope>
    <scope>SUBCELLULAR LOCATION</scope>
</reference>
<reference key="17">
    <citation type="journal article" date="2009" name="J. Cell Biol.">
        <title>The TRC8 E3 ligase ubiquitinates MHC class I molecules before dislocation from the ER.</title>
        <authorList>
            <person name="Stagg H.R."/>
            <person name="Thomas M."/>
            <person name="van den Boomen D."/>
            <person name="Wiertz E.J."/>
            <person name="Drabkin H.A."/>
            <person name="Gemmill R.M."/>
            <person name="Lehner P.J."/>
        </authorList>
    </citation>
    <scope>INTERACTION WITH RNF139</scope>
</reference>
<reference key="18">
    <citation type="journal article" date="2009" name="J. Proteome Res.">
        <title>Glycoproteomics analysis of human liver tissue by combination of multiple enzyme digestion and hydrazide chemistry.</title>
        <authorList>
            <person name="Chen R."/>
            <person name="Jiang X."/>
            <person name="Sun D."/>
            <person name="Han G."/>
            <person name="Wang F."/>
            <person name="Ye M."/>
            <person name="Wang L."/>
            <person name="Zou H."/>
        </authorList>
    </citation>
    <scope>GLYCOSYLATION [LARGE SCALE ANALYSIS] AT ASN-10 AND ASN-20</scope>
    <source>
        <tissue>Liver</tissue>
    </source>
</reference>
<reference key="19">
    <citation type="journal article" date="2011" name="BMC Syst. Biol.">
        <title>Initial characterization of the human central proteome.</title>
        <authorList>
            <person name="Burkard T.R."/>
            <person name="Planyavsky M."/>
            <person name="Kaupe I."/>
            <person name="Breitwieser F.P."/>
            <person name="Buerckstuemmer T."/>
            <person name="Bennett K.L."/>
            <person name="Superti-Furga G."/>
            <person name="Colinge J."/>
        </authorList>
    </citation>
    <scope>IDENTIFICATION BY MASS SPECTROMETRY [LARGE SCALE ANALYSIS]</scope>
</reference>
<reference key="20">
    <citation type="journal article" date="2014" name="EMBO J.">
        <title>Signal peptide peptidase functions in ERAD to cleave the unfolded protein response regulator XBP1u.</title>
        <authorList>
            <person name="Chen C.Y."/>
            <person name="Malchus N.S."/>
            <person name="Hehn B."/>
            <person name="Stelzer W."/>
            <person name="Avci D."/>
            <person name="Langosch D."/>
            <person name="Lemberg M.K."/>
        </authorList>
    </citation>
    <scope>FUNCTION IN CLEAVAGE OF XBP1</scope>
    <scope>INTERACTION WITH DERL1; RNF139 AND XBP1</scope>
    <scope>MUTAGENESIS OF ASP-265</scope>
</reference>
<reference key="21">
    <citation type="journal article" date="2014" name="J. Proteomics">
        <title>An enzyme assisted RP-RPLC approach for in-depth analysis of human liver phosphoproteome.</title>
        <authorList>
            <person name="Bian Y."/>
            <person name="Song C."/>
            <person name="Cheng K."/>
            <person name="Dong M."/>
            <person name="Wang F."/>
            <person name="Huang J."/>
            <person name="Sun D."/>
            <person name="Wang L."/>
            <person name="Ye M."/>
            <person name="Zou H."/>
        </authorList>
    </citation>
    <scope>PHOSPHORYLATION [LARGE SCALE ANALYSIS] AT SER-367</scope>
    <scope>IDENTIFICATION BY MASS SPECTROMETRY [LARGE SCALE ANALYSIS]</scope>
    <source>
        <tissue>Liver</tissue>
    </source>
</reference>
<reference key="22">
    <citation type="journal article" date="2015" name="Proteomics">
        <title>N-terminome analysis of the human mitochondrial proteome.</title>
        <authorList>
            <person name="Vaca Jacome A.S."/>
            <person name="Rabilloud T."/>
            <person name="Schaeffer-Reiss C."/>
            <person name="Rompais M."/>
            <person name="Ayoub D."/>
            <person name="Lane L."/>
            <person name="Bairoch A."/>
            <person name="Van Dorsselaer A."/>
            <person name="Carapito C."/>
        </authorList>
    </citation>
    <scope>IDENTIFICATION BY MASS SPECTROMETRY [LARGE SCALE ANALYSIS]</scope>
</reference>
<gene>
    <name evidence="23" type="primary">HM13</name>
    <name type="synonym">H13</name>
    <name evidence="19" type="synonym">IMP1</name>
    <name type="synonym">PSL3</name>
    <name evidence="17" type="synonym">SPP</name>
    <name type="ORF">MSTP086</name>
</gene>
<protein>
    <recommendedName>
        <fullName evidence="17">Signal peptide peptidase</fullName>
        <ecNumber evidence="6 7 11">3.4.23.-</ecNumber>
    </recommendedName>
    <alternativeName>
        <fullName>Intramembrane protease 1</fullName>
        <shortName evidence="22">IMP-1</shortName>
        <shortName evidence="22">IMPAS-1</shortName>
        <shortName evidence="19">hIMP1</shortName>
    </alternativeName>
    <alternativeName>
        <fullName>Minor histocompatibility antigen H13</fullName>
    </alternativeName>
    <alternativeName>
        <fullName>Presenilin-like protein 3</fullName>
    </alternativeName>
    <alternativeName>
        <fullName>Signal peptide peptidase-like 1</fullName>
    </alternativeName>
</protein>
<name>SPP_HUMAN</name>
<organism>
    <name type="scientific">Homo sapiens</name>
    <name type="common">Human</name>
    <dbReference type="NCBI Taxonomy" id="9606"/>
    <lineage>
        <taxon>Eukaryota</taxon>
        <taxon>Metazoa</taxon>
        <taxon>Chordata</taxon>
        <taxon>Craniata</taxon>
        <taxon>Vertebrata</taxon>
        <taxon>Euteleostomi</taxon>
        <taxon>Mammalia</taxon>
        <taxon>Eutheria</taxon>
        <taxon>Euarchontoglires</taxon>
        <taxon>Primates</taxon>
        <taxon>Haplorrhini</taxon>
        <taxon>Catarrhini</taxon>
        <taxon>Hominidae</taxon>
        <taxon>Homo</taxon>
    </lineage>
</organism>
<feature type="chain" id="PRO_0000073907" description="Signal peptide peptidase">
    <location>
        <begin position="1"/>
        <end position="377"/>
    </location>
</feature>
<feature type="topological domain" description="Lumenal" evidence="7 12">
    <location>
        <begin position="1"/>
        <end position="31"/>
    </location>
</feature>
<feature type="transmembrane region" description="Helical" evidence="4">
    <location>
        <begin position="32"/>
        <end position="52"/>
    </location>
</feature>
<feature type="topological domain" description="Cytoplasmic" evidence="4">
    <location>
        <begin position="53"/>
        <end position="77"/>
    </location>
</feature>
<feature type="transmembrane region" description="Helical" evidence="4">
    <location>
        <begin position="78"/>
        <end position="98"/>
    </location>
</feature>
<feature type="topological domain" description="Lumenal" evidence="4">
    <location>
        <begin position="99"/>
        <end position="100"/>
    </location>
</feature>
<feature type="transmembrane region" description="Helical" evidence="4">
    <location>
        <begin position="101"/>
        <end position="121"/>
    </location>
</feature>
<feature type="topological domain" description="Cytoplasmic" evidence="4">
    <location>
        <begin position="122"/>
        <end position="157"/>
    </location>
</feature>
<feature type="transmembrane region" description="Helical" evidence="4">
    <location>
        <begin position="158"/>
        <end position="178"/>
    </location>
</feature>
<feature type="topological domain" description="Lumenal" evidence="4">
    <location>
        <begin position="179"/>
        <end position="181"/>
    </location>
</feature>
<feature type="transmembrane region" description="Helical" evidence="4">
    <location>
        <begin position="182"/>
        <end position="202"/>
    </location>
</feature>
<feature type="topological domain" description="Cytoplasmic" evidence="4">
    <location>
        <begin position="203"/>
        <end position="209"/>
    </location>
</feature>
<feature type="transmembrane region" description="Helical" evidence="4">
    <location>
        <begin position="210"/>
        <end position="230"/>
    </location>
</feature>
<feature type="topological domain" description="Lumenal" evidence="12">
    <location>
        <begin position="231"/>
        <end position="256"/>
    </location>
</feature>
<feature type="transmembrane region" description="Helical" evidence="4">
    <location>
        <begin position="257"/>
        <end position="277"/>
    </location>
</feature>
<feature type="topological domain" description="Cytoplasmic" evidence="4">
    <location>
        <begin position="278"/>
        <end position="290"/>
    </location>
</feature>
<feature type="transmembrane region" description="Helical" evidence="4">
    <location>
        <begin position="291"/>
        <end position="311"/>
    </location>
</feature>
<feature type="topological domain" description="Lumenal" evidence="4">
    <location>
        <begin position="312"/>
        <end position="314"/>
    </location>
</feature>
<feature type="transmembrane region" description="Helical" evidence="4">
    <location>
        <begin position="315"/>
        <end position="335"/>
    </location>
</feature>
<feature type="topological domain" description="Cytoplasmic" evidence="12">
    <location>
        <begin position="336"/>
        <end position="377"/>
    </location>
</feature>
<feature type="region of interest" description="Disordered" evidence="5">
    <location>
        <begin position="1"/>
        <end position="27"/>
    </location>
</feature>
<feature type="region of interest" description="Disordered" evidence="5">
    <location>
        <begin position="345"/>
        <end position="377"/>
    </location>
</feature>
<feature type="short sequence motif" description="PAL">
    <location>
        <begin position="317"/>
        <end position="319"/>
    </location>
</feature>
<feature type="active site" evidence="2">
    <location>
        <position position="219"/>
    </location>
</feature>
<feature type="active site" evidence="2">
    <location>
        <position position="265"/>
    </location>
</feature>
<feature type="modified residue" description="Phosphoserine" evidence="24">
    <location>
        <position position="367"/>
    </location>
</feature>
<feature type="glycosylation site" description="N-linked (GlcNAc...) asparagine" evidence="14">
    <location>
        <position position="10"/>
    </location>
</feature>
<feature type="glycosylation site" description="N-linked (GlcNAc...) asparagine" evidence="14">
    <location>
        <position position="20"/>
    </location>
</feature>
<feature type="splice variant" id="VSP_015082" description="In isoform 5." evidence="21">
    <location>
        <begin position="181"/>
        <end position="222"/>
    </location>
</feature>
<feature type="splice variant" id="VSP_005196" description="In isoform 2." evidence="18">
    <original>E</original>
    <variation>ESSAEILPHTPRLTHFPTVSGSPASLADSMQQKLAGPRRRRPQNPSAIYE</variation>
    <location>
        <position position="347"/>
    </location>
</feature>
<feature type="splice variant" id="VSP_015083" description="In isoform 4." evidence="18 20">
    <original>ESNPKDPAAVTESKEGTEASASKGLEKKEK</original>
    <variation>SSAEILPHTPRLTHFPTVSGSPASLADSMQQKLAGPRRRRPQNPSAM</variation>
    <location>
        <begin position="348"/>
        <end position="377"/>
    </location>
</feature>
<feature type="sequence variant" id="VAR_014274" description="In dbSNP:rs1044419.">
    <original>A</original>
    <variation>P</variation>
    <location>
        <position position="259"/>
    </location>
</feature>
<feature type="mutagenesis site" description="Abolishes N-glycosylation; when associated with Q-20." evidence="7">
    <original>N</original>
    <variation>Q</variation>
    <location>
        <position position="10"/>
    </location>
</feature>
<feature type="mutagenesis site" description="Abolishes N-glycosylation; when associated with Q-10." evidence="7">
    <original>N</original>
    <variation>Q</variation>
    <location>
        <position position="20"/>
    </location>
</feature>
<feature type="mutagenesis site" description="Abolishes proteolysis of PSEN1." evidence="11">
    <original>D</original>
    <variation>A</variation>
    <location>
        <position position="219"/>
    </location>
</feature>
<feature type="mutagenesis site" description="No effect on proteolysis of PSEN1." evidence="11">
    <original>G</original>
    <variation>A</variation>
    <location>
        <position position="264"/>
    </location>
</feature>
<feature type="mutagenesis site" description="No effect on inhibitor binding; abolishes signal peptide peptidase activity. Abolishes proteolysis of PSEN1. Abolishes proteolysis of XBP1 isoform 1 and increases interaction with XBP1 isoform 1." evidence="7 11 16">
    <original>D</original>
    <variation>A</variation>
    <location>
        <position position="265"/>
    </location>
</feature>
<feature type="mutagenesis site" description="Abolishes proteolysis of PSEN1." evidence="11">
    <original>P</original>
    <variation>L</variation>
    <location>
        <position position="317"/>
    </location>
</feature>
<feature type="sequence conflict" description="In Ref. 1; AA sequence." evidence="21" ref="1">
    <original>S</original>
    <variation>N</variation>
    <location>
        <position position="132"/>
    </location>
</feature>
<feature type="sequence conflict" description="In Ref. 8; BAC11519." evidence="21" ref="8">
    <original>K</original>
    <variation>R</variation>
    <location>
        <position position="150"/>
    </location>
</feature>
<feature type="sequence conflict" description="In Ref. 1; AA sequence." evidence="21" ref="1">
    <original>D</original>
    <variation>A</variation>
    <location>
        <position position="159"/>
    </location>
</feature>
<feature type="sequence conflict" description="In Ref. 11; AAH08938/AAH08959." evidence="21" ref="11">
    <original>S</original>
    <variation>F</variation>
    <location>
        <position position="235"/>
    </location>
</feature>
<feature type="sequence conflict" description="In Ref. 7; AAQ13609." evidence="21" ref="7">
    <original>F</original>
    <variation>Y</variation>
    <location>
        <position position="295"/>
    </location>
</feature>